<name>ERA_STRPD</name>
<sequence length="298" mass="34155">MFKSGFVAILGRPNVGKSTFLNHVMGQKIAIMSDKAQTTRNKIMGIYTTETEQIVFIDTPGIHKPKTALGDFMVESAYSTLREVETVLFMVPADEKRGKGDDMIIERLKAAKIPVILVINKIDKVHPDQLLEQIDDFRSQMDFKEVVPISALEGNNVPTLIKLLTDNLEEGFQYFPEDQITDHPERFLVSEMIREKVLHFTQQEVPHSVAVVVESMKRDEETDKVHIRATIMVERDSQKGIIIGKQGAMLKKIGKMARRDIELMLGDKVYLETWVKVKKNWRDKKLDLADFGYNEKEY</sequence>
<dbReference type="EMBL" id="CP000260">
    <property type="protein sequence ID" value="ABF33456.1"/>
    <property type="molecule type" value="Genomic_DNA"/>
</dbReference>
<dbReference type="SMR" id="Q1JI67"/>
<dbReference type="KEGG" id="sph:MGAS10270_Spy0391"/>
<dbReference type="HOGENOM" id="CLU_038009_1_0_9"/>
<dbReference type="Proteomes" id="UP000002436">
    <property type="component" value="Chromosome"/>
</dbReference>
<dbReference type="GO" id="GO:0005829">
    <property type="term" value="C:cytosol"/>
    <property type="evidence" value="ECO:0007669"/>
    <property type="project" value="TreeGrafter"/>
</dbReference>
<dbReference type="GO" id="GO:0005886">
    <property type="term" value="C:plasma membrane"/>
    <property type="evidence" value="ECO:0007669"/>
    <property type="project" value="UniProtKB-SubCell"/>
</dbReference>
<dbReference type="GO" id="GO:0005525">
    <property type="term" value="F:GTP binding"/>
    <property type="evidence" value="ECO:0007669"/>
    <property type="project" value="UniProtKB-UniRule"/>
</dbReference>
<dbReference type="GO" id="GO:0003924">
    <property type="term" value="F:GTPase activity"/>
    <property type="evidence" value="ECO:0007669"/>
    <property type="project" value="UniProtKB-UniRule"/>
</dbReference>
<dbReference type="GO" id="GO:0043024">
    <property type="term" value="F:ribosomal small subunit binding"/>
    <property type="evidence" value="ECO:0007669"/>
    <property type="project" value="TreeGrafter"/>
</dbReference>
<dbReference type="GO" id="GO:0070181">
    <property type="term" value="F:small ribosomal subunit rRNA binding"/>
    <property type="evidence" value="ECO:0007669"/>
    <property type="project" value="UniProtKB-UniRule"/>
</dbReference>
<dbReference type="GO" id="GO:0000028">
    <property type="term" value="P:ribosomal small subunit assembly"/>
    <property type="evidence" value="ECO:0007669"/>
    <property type="project" value="TreeGrafter"/>
</dbReference>
<dbReference type="CDD" id="cd04163">
    <property type="entry name" value="Era"/>
    <property type="match status" value="1"/>
</dbReference>
<dbReference type="CDD" id="cd22534">
    <property type="entry name" value="KH-II_Era"/>
    <property type="match status" value="1"/>
</dbReference>
<dbReference type="FunFam" id="3.30.300.20:FF:000003">
    <property type="entry name" value="GTPase Era"/>
    <property type="match status" value="1"/>
</dbReference>
<dbReference type="FunFam" id="3.40.50.300:FF:000094">
    <property type="entry name" value="GTPase Era"/>
    <property type="match status" value="1"/>
</dbReference>
<dbReference type="Gene3D" id="3.30.300.20">
    <property type="match status" value="1"/>
</dbReference>
<dbReference type="Gene3D" id="3.40.50.300">
    <property type="entry name" value="P-loop containing nucleotide triphosphate hydrolases"/>
    <property type="match status" value="1"/>
</dbReference>
<dbReference type="HAMAP" id="MF_00367">
    <property type="entry name" value="GTPase_Era"/>
    <property type="match status" value="1"/>
</dbReference>
<dbReference type="InterPro" id="IPR030388">
    <property type="entry name" value="G_ERA_dom"/>
</dbReference>
<dbReference type="InterPro" id="IPR006073">
    <property type="entry name" value="GTP-bd"/>
</dbReference>
<dbReference type="InterPro" id="IPR005662">
    <property type="entry name" value="GTPase_Era-like"/>
</dbReference>
<dbReference type="InterPro" id="IPR015946">
    <property type="entry name" value="KH_dom-like_a/b"/>
</dbReference>
<dbReference type="InterPro" id="IPR004044">
    <property type="entry name" value="KH_dom_type_2"/>
</dbReference>
<dbReference type="InterPro" id="IPR009019">
    <property type="entry name" value="KH_sf_prok-type"/>
</dbReference>
<dbReference type="InterPro" id="IPR027417">
    <property type="entry name" value="P-loop_NTPase"/>
</dbReference>
<dbReference type="InterPro" id="IPR005225">
    <property type="entry name" value="Small_GTP-bd"/>
</dbReference>
<dbReference type="NCBIfam" id="TIGR00436">
    <property type="entry name" value="era"/>
    <property type="match status" value="1"/>
</dbReference>
<dbReference type="NCBIfam" id="NF000908">
    <property type="entry name" value="PRK00089.1"/>
    <property type="match status" value="1"/>
</dbReference>
<dbReference type="NCBIfam" id="TIGR00231">
    <property type="entry name" value="small_GTP"/>
    <property type="match status" value="1"/>
</dbReference>
<dbReference type="PANTHER" id="PTHR42698">
    <property type="entry name" value="GTPASE ERA"/>
    <property type="match status" value="1"/>
</dbReference>
<dbReference type="PANTHER" id="PTHR42698:SF1">
    <property type="entry name" value="GTPASE ERA, MITOCHONDRIAL"/>
    <property type="match status" value="1"/>
</dbReference>
<dbReference type="Pfam" id="PF07650">
    <property type="entry name" value="KH_2"/>
    <property type="match status" value="1"/>
</dbReference>
<dbReference type="Pfam" id="PF01926">
    <property type="entry name" value="MMR_HSR1"/>
    <property type="match status" value="1"/>
</dbReference>
<dbReference type="SUPFAM" id="SSF52540">
    <property type="entry name" value="P-loop containing nucleoside triphosphate hydrolases"/>
    <property type="match status" value="1"/>
</dbReference>
<dbReference type="SUPFAM" id="SSF54814">
    <property type="entry name" value="Prokaryotic type KH domain (KH-domain type II)"/>
    <property type="match status" value="1"/>
</dbReference>
<dbReference type="PROSITE" id="PS51713">
    <property type="entry name" value="G_ERA"/>
    <property type="match status" value="1"/>
</dbReference>
<dbReference type="PROSITE" id="PS50823">
    <property type="entry name" value="KH_TYPE_2"/>
    <property type="match status" value="1"/>
</dbReference>
<evidence type="ECO:0000255" key="1">
    <source>
        <dbReference type="HAMAP-Rule" id="MF_00367"/>
    </source>
</evidence>
<evidence type="ECO:0000255" key="2">
    <source>
        <dbReference type="PROSITE-ProRule" id="PRU01050"/>
    </source>
</evidence>
<reference key="1">
    <citation type="journal article" date="2006" name="Proc. Natl. Acad. Sci. U.S.A.">
        <title>Molecular genetic anatomy of inter- and intraserotype variation in the human bacterial pathogen group A Streptococcus.</title>
        <authorList>
            <person name="Beres S.B."/>
            <person name="Richter E.W."/>
            <person name="Nagiec M.J."/>
            <person name="Sumby P."/>
            <person name="Porcella S.F."/>
            <person name="DeLeo F.R."/>
            <person name="Musser J.M."/>
        </authorList>
    </citation>
    <scope>NUCLEOTIDE SEQUENCE [LARGE SCALE GENOMIC DNA]</scope>
    <source>
        <strain>MGAS10270</strain>
    </source>
</reference>
<organism>
    <name type="scientific">Streptococcus pyogenes serotype M2 (strain MGAS10270)</name>
    <dbReference type="NCBI Taxonomy" id="370552"/>
    <lineage>
        <taxon>Bacteria</taxon>
        <taxon>Bacillati</taxon>
        <taxon>Bacillota</taxon>
        <taxon>Bacilli</taxon>
        <taxon>Lactobacillales</taxon>
        <taxon>Streptococcaceae</taxon>
        <taxon>Streptococcus</taxon>
    </lineage>
</organism>
<keyword id="KW-1003">Cell membrane</keyword>
<keyword id="KW-0963">Cytoplasm</keyword>
<keyword id="KW-0342">GTP-binding</keyword>
<keyword id="KW-0472">Membrane</keyword>
<keyword id="KW-0547">Nucleotide-binding</keyword>
<keyword id="KW-0690">Ribosome biogenesis</keyword>
<keyword id="KW-0694">RNA-binding</keyword>
<keyword id="KW-0699">rRNA-binding</keyword>
<protein>
    <recommendedName>
        <fullName evidence="1">GTPase Era</fullName>
    </recommendedName>
</protein>
<accession>Q1JI67</accession>
<proteinExistence type="inferred from homology"/>
<gene>
    <name evidence="1" type="primary">era</name>
    <name type="ordered locus">MGAS10270_Spy0391</name>
</gene>
<feature type="chain" id="PRO_1000079753" description="GTPase Era">
    <location>
        <begin position="1"/>
        <end position="298"/>
    </location>
</feature>
<feature type="domain" description="Era-type G" evidence="2">
    <location>
        <begin position="3"/>
        <end position="170"/>
    </location>
</feature>
<feature type="domain" description="KH type-2" evidence="1">
    <location>
        <begin position="201"/>
        <end position="279"/>
    </location>
</feature>
<feature type="region of interest" description="G1" evidence="2">
    <location>
        <begin position="11"/>
        <end position="18"/>
    </location>
</feature>
<feature type="region of interest" description="G2" evidence="2">
    <location>
        <begin position="37"/>
        <end position="41"/>
    </location>
</feature>
<feature type="region of interest" description="G3" evidence="2">
    <location>
        <begin position="58"/>
        <end position="61"/>
    </location>
</feature>
<feature type="region of interest" description="G4" evidence="2">
    <location>
        <begin position="120"/>
        <end position="123"/>
    </location>
</feature>
<feature type="region of interest" description="G5" evidence="2">
    <location>
        <begin position="149"/>
        <end position="151"/>
    </location>
</feature>
<feature type="binding site" evidence="1">
    <location>
        <begin position="11"/>
        <end position="18"/>
    </location>
    <ligand>
        <name>GTP</name>
        <dbReference type="ChEBI" id="CHEBI:37565"/>
    </ligand>
</feature>
<feature type="binding site" evidence="1">
    <location>
        <begin position="58"/>
        <end position="62"/>
    </location>
    <ligand>
        <name>GTP</name>
        <dbReference type="ChEBI" id="CHEBI:37565"/>
    </ligand>
</feature>
<feature type="binding site" evidence="1">
    <location>
        <begin position="120"/>
        <end position="123"/>
    </location>
    <ligand>
        <name>GTP</name>
        <dbReference type="ChEBI" id="CHEBI:37565"/>
    </ligand>
</feature>
<comment type="function">
    <text evidence="1">An essential GTPase that binds both GDP and GTP, with rapid nucleotide exchange. Plays a role in 16S rRNA processing and 30S ribosomal subunit biogenesis and possibly also in cell cycle regulation and energy metabolism.</text>
</comment>
<comment type="subunit">
    <text evidence="1">Monomer.</text>
</comment>
<comment type="subcellular location">
    <subcellularLocation>
        <location>Cytoplasm</location>
    </subcellularLocation>
    <subcellularLocation>
        <location evidence="1">Cell membrane</location>
        <topology evidence="1">Peripheral membrane protein</topology>
    </subcellularLocation>
</comment>
<comment type="similarity">
    <text evidence="1 2">Belongs to the TRAFAC class TrmE-Era-EngA-EngB-Septin-like GTPase superfamily. Era GTPase family.</text>
</comment>